<organism>
    <name type="scientific">Staphylococcus epidermidis (strain ATCC 12228 / FDA PCI 1200)</name>
    <dbReference type="NCBI Taxonomy" id="176280"/>
    <lineage>
        <taxon>Bacteria</taxon>
        <taxon>Bacillati</taxon>
        <taxon>Bacillota</taxon>
        <taxon>Bacilli</taxon>
        <taxon>Bacillales</taxon>
        <taxon>Staphylococcaceae</taxon>
        <taxon>Staphylococcus</taxon>
    </lineage>
</organism>
<gene>
    <name evidence="1" type="primary">rpsH</name>
    <name type="ordered locus">SE_1809</name>
</gene>
<protein>
    <recommendedName>
        <fullName evidence="1">Small ribosomal subunit protein uS8</fullName>
    </recommendedName>
    <alternativeName>
        <fullName evidence="2">30S ribosomal protein S8</fullName>
    </alternativeName>
</protein>
<dbReference type="EMBL" id="AE015929">
    <property type="protein sequence ID" value="AAO05450.1"/>
    <property type="molecule type" value="Genomic_DNA"/>
</dbReference>
<dbReference type="RefSeq" id="NP_765364.1">
    <property type="nucleotide sequence ID" value="NC_004461.1"/>
</dbReference>
<dbReference type="RefSeq" id="WP_001829768.1">
    <property type="nucleotide sequence ID" value="NZ_WBME01000007.1"/>
</dbReference>
<dbReference type="SMR" id="Q8CRH4"/>
<dbReference type="GeneID" id="50018087"/>
<dbReference type="KEGG" id="sep:SE_1809"/>
<dbReference type="PATRIC" id="fig|176280.10.peg.1766"/>
<dbReference type="eggNOG" id="COG0096">
    <property type="taxonomic scope" value="Bacteria"/>
</dbReference>
<dbReference type="HOGENOM" id="CLU_098428_0_2_9"/>
<dbReference type="OrthoDB" id="9802617at2"/>
<dbReference type="Proteomes" id="UP000001411">
    <property type="component" value="Chromosome"/>
</dbReference>
<dbReference type="GO" id="GO:1990904">
    <property type="term" value="C:ribonucleoprotein complex"/>
    <property type="evidence" value="ECO:0007669"/>
    <property type="project" value="UniProtKB-KW"/>
</dbReference>
<dbReference type="GO" id="GO:0005840">
    <property type="term" value="C:ribosome"/>
    <property type="evidence" value="ECO:0007669"/>
    <property type="project" value="UniProtKB-KW"/>
</dbReference>
<dbReference type="GO" id="GO:0019843">
    <property type="term" value="F:rRNA binding"/>
    <property type="evidence" value="ECO:0007669"/>
    <property type="project" value="UniProtKB-UniRule"/>
</dbReference>
<dbReference type="GO" id="GO:0003735">
    <property type="term" value="F:structural constituent of ribosome"/>
    <property type="evidence" value="ECO:0007669"/>
    <property type="project" value="InterPro"/>
</dbReference>
<dbReference type="GO" id="GO:0006412">
    <property type="term" value="P:translation"/>
    <property type="evidence" value="ECO:0007669"/>
    <property type="project" value="UniProtKB-UniRule"/>
</dbReference>
<dbReference type="FunFam" id="3.30.1370.30:FF:000002">
    <property type="entry name" value="30S ribosomal protein S8"/>
    <property type="match status" value="1"/>
</dbReference>
<dbReference type="FunFam" id="3.30.1490.10:FF:000001">
    <property type="entry name" value="30S ribosomal protein S8"/>
    <property type="match status" value="1"/>
</dbReference>
<dbReference type="Gene3D" id="3.30.1370.30">
    <property type="match status" value="1"/>
</dbReference>
<dbReference type="Gene3D" id="3.30.1490.10">
    <property type="match status" value="1"/>
</dbReference>
<dbReference type="HAMAP" id="MF_01302_B">
    <property type="entry name" value="Ribosomal_uS8_B"/>
    <property type="match status" value="1"/>
</dbReference>
<dbReference type="InterPro" id="IPR000630">
    <property type="entry name" value="Ribosomal_uS8"/>
</dbReference>
<dbReference type="InterPro" id="IPR047863">
    <property type="entry name" value="Ribosomal_uS8_CS"/>
</dbReference>
<dbReference type="InterPro" id="IPR035987">
    <property type="entry name" value="Ribosomal_uS8_sf"/>
</dbReference>
<dbReference type="NCBIfam" id="NF001109">
    <property type="entry name" value="PRK00136.1"/>
    <property type="match status" value="1"/>
</dbReference>
<dbReference type="PANTHER" id="PTHR11758">
    <property type="entry name" value="40S RIBOSOMAL PROTEIN S15A"/>
    <property type="match status" value="1"/>
</dbReference>
<dbReference type="Pfam" id="PF00410">
    <property type="entry name" value="Ribosomal_S8"/>
    <property type="match status" value="1"/>
</dbReference>
<dbReference type="SUPFAM" id="SSF56047">
    <property type="entry name" value="Ribosomal protein S8"/>
    <property type="match status" value="1"/>
</dbReference>
<dbReference type="PROSITE" id="PS00053">
    <property type="entry name" value="RIBOSOMAL_S8"/>
    <property type="match status" value="1"/>
</dbReference>
<keyword id="KW-0687">Ribonucleoprotein</keyword>
<keyword id="KW-0689">Ribosomal protein</keyword>
<keyword id="KW-0694">RNA-binding</keyword>
<keyword id="KW-0699">rRNA-binding</keyword>
<feature type="chain" id="PRO_0000126489" description="Small ribosomal subunit protein uS8">
    <location>
        <begin position="1"/>
        <end position="132"/>
    </location>
</feature>
<accession>Q8CRH4</accession>
<sequence length="132" mass="14825">MTMTDPIADMLTRVRNANMVRHEKLELPASNIKKEIAEILKSEGFIKNVEYVEDDKQGVIRLFLKYGQNNERVITGLKRISKPGLRVYAKANEVPKVLNGLGIALVSTSEGVITDKEARKRNVGGEIIAYVW</sequence>
<name>RS8_STAES</name>
<proteinExistence type="inferred from homology"/>
<comment type="function">
    <text evidence="1">One of the primary rRNA binding proteins, it binds directly to 16S rRNA central domain where it helps coordinate assembly of the platform of the 30S subunit.</text>
</comment>
<comment type="subunit">
    <text evidence="1">Part of the 30S ribosomal subunit. Contacts proteins S5 and S12.</text>
</comment>
<comment type="similarity">
    <text evidence="1">Belongs to the universal ribosomal protein uS8 family.</text>
</comment>
<evidence type="ECO:0000255" key="1">
    <source>
        <dbReference type="HAMAP-Rule" id="MF_01302"/>
    </source>
</evidence>
<evidence type="ECO:0000305" key="2"/>
<reference key="1">
    <citation type="journal article" date="2003" name="Mol. Microbiol.">
        <title>Genome-based analysis of virulence genes in a non-biofilm-forming Staphylococcus epidermidis strain (ATCC 12228).</title>
        <authorList>
            <person name="Zhang Y.-Q."/>
            <person name="Ren S.-X."/>
            <person name="Li H.-L."/>
            <person name="Wang Y.-X."/>
            <person name="Fu G."/>
            <person name="Yang J."/>
            <person name="Qin Z.-Q."/>
            <person name="Miao Y.-G."/>
            <person name="Wang W.-Y."/>
            <person name="Chen R.-S."/>
            <person name="Shen Y."/>
            <person name="Chen Z."/>
            <person name="Yuan Z.-H."/>
            <person name="Zhao G.-P."/>
            <person name="Qu D."/>
            <person name="Danchin A."/>
            <person name="Wen Y.-M."/>
        </authorList>
    </citation>
    <scope>NUCLEOTIDE SEQUENCE [LARGE SCALE GENOMIC DNA]</scope>
    <source>
        <strain>ATCC 12228 / FDA PCI 1200</strain>
    </source>
</reference>